<evidence type="ECO:0000255" key="1">
    <source>
        <dbReference type="HAMAP-Rule" id="MF_01579"/>
    </source>
</evidence>
<evidence type="ECO:0000305" key="2"/>
<sequence length="479" mass="53296">MAQHTVYFPDAFLTQMREAMPSTLSFDDFLAACQRPLRRSIRVNTLKISVADFLQLTAPYGWTLTPIPWCEEGFWIERDNEDALPLGSTAEHLSGLFYIQEASSMLPVAALFADGNAPQRVMDVAAAPGSKTTQIAARMNNEGAILANEFSASRVKVLHANISRCGISNVALTHFDGRVFGVAVPEMFDAILLDAPCSGEGVVRKDPDALKNWSPESNQEIAATQRELIDSAFHALRPGGTLVYSTCTLNREENEAVCMWLKETYPDAVEFLPLGELFPAANKALTEEGFLHVFPQIYDCEGFFVARLRKTQAIPALPAPKYKVGNFPFSPVKDREAGQIRQAAAGVGLNWDENLRLWQRDKELWLFPVGIEALIGKVRFSRLGIKLAETHNKGYRWQHEAVIALATPDNVNAFELTPQEAEEWYRGRDVYPQAAPVADDVLVTFQHQPIGLAKRIGSRLKNSYPRELVRDGKLFTSNA</sequence>
<reference key="1">
    <citation type="submission" date="2008-02" db="EMBL/GenBank/DDBJ databases">
        <title>Complete sequence of Escherichia coli C str. ATCC 8739.</title>
        <authorList>
            <person name="Copeland A."/>
            <person name="Lucas S."/>
            <person name="Lapidus A."/>
            <person name="Glavina del Rio T."/>
            <person name="Dalin E."/>
            <person name="Tice H."/>
            <person name="Bruce D."/>
            <person name="Goodwin L."/>
            <person name="Pitluck S."/>
            <person name="Kiss H."/>
            <person name="Brettin T."/>
            <person name="Detter J.C."/>
            <person name="Han C."/>
            <person name="Kuske C.R."/>
            <person name="Schmutz J."/>
            <person name="Larimer F."/>
            <person name="Land M."/>
            <person name="Hauser L."/>
            <person name="Kyrpides N."/>
            <person name="Mikhailova N."/>
            <person name="Ingram L."/>
            <person name="Richardson P."/>
        </authorList>
    </citation>
    <scope>NUCLEOTIDE SEQUENCE [LARGE SCALE GENOMIC DNA]</scope>
    <source>
        <strain>ATCC 8739 / DSM 1576 / NBRC 3972 / NCIMB 8545 / WDCM 00012 / Crooks</strain>
    </source>
</reference>
<proteinExistence type="inferred from homology"/>
<dbReference type="EC" id="2.1.1.178" evidence="1"/>
<dbReference type="EMBL" id="CP000946">
    <property type="protein sequence ID" value="ACA77447.1"/>
    <property type="status" value="ALT_INIT"/>
    <property type="molecule type" value="Genomic_DNA"/>
</dbReference>
<dbReference type="RefSeq" id="WP_001338165.1">
    <property type="nucleotide sequence ID" value="NZ_MTFT01000011.1"/>
</dbReference>
<dbReference type="SMR" id="B1J0Q3"/>
<dbReference type="KEGG" id="ecl:EcolC_1797"/>
<dbReference type="HOGENOM" id="CLU_005316_6_2_6"/>
<dbReference type="GO" id="GO:0005737">
    <property type="term" value="C:cytoplasm"/>
    <property type="evidence" value="ECO:0007669"/>
    <property type="project" value="UniProtKB-SubCell"/>
</dbReference>
<dbReference type="GO" id="GO:0003723">
    <property type="term" value="F:RNA binding"/>
    <property type="evidence" value="ECO:0007669"/>
    <property type="project" value="UniProtKB-KW"/>
</dbReference>
<dbReference type="GO" id="GO:0009383">
    <property type="term" value="F:rRNA (cytosine-C5-)-methyltransferase activity"/>
    <property type="evidence" value="ECO:0007669"/>
    <property type="project" value="TreeGrafter"/>
</dbReference>
<dbReference type="GO" id="GO:0070475">
    <property type="term" value="P:rRNA base methylation"/>
    <property type="evidence" value="ECO:0007669"/>
    <property type="project" value="TreeGrafter"/>
</dbReference>
<dbReference type="CDD" id="cd02440">
    <property type="entry name" value="AdoMet_MTases"/>
    <property type="match status" value="1"/>
</dbReference>
<dbReference type="FunFam" id="3.10.450.720:FF:000001">
    <property type="entry name" value="Ribosomal RNA small subunit methyltransferase F"/>
    <property type="match status" value="1"/>
</dbReference>
<dbReference type="FunFam" id="3.40.50.150:FF:000079">
    <property type="entry name" value="Ribosomal RNA small subunit methyltransferase F"/>
    <property type="match status" value="1"/>
</dbReference>
<dbReference type="Gene3D" id="3.10.450.720">
    <property type="match status" value="1"/>
</dbReference>
<dbReference type="Gene3D" id="3.40.50.150">
    <property type="entry name" value="Vaccinia Virus protein VP39"/>
    <property type="match status" value="1"/>
</dbReference>
<dbReference type="HAMAP" id="MF_01579">
    <property type="entry name" value="16SrRNA_methyltr_F"/>
    <property type="match status" value="1"/>
</dbReference>
<dbReference type="InterPro" id="IPR031341">
    <property type="entry name" value="Methyltr_RsmF_N"/>
</dbReference>
<dbReference type="InterPro" id="IPR049560">
    <property type="entry name" value="MeTrfase_RsmB-F_NOP2_cat"/>
</dbReference>
<dbReference type="InterPro" id="IPR001678">
    <property type="entry name" value="MeTrfase_RsmB-F_NOP2_dom"/>
</dbReference>
<dbReference type="InterPro" id="IPR027391">
    <property type="entry name" value="Nol1_Nop2_Fmu_2"/>
</dbReference>
<dbReference type="InterPro" id="IPR011023">
    <property type="entry name" value="Nop2p"/>
</dbReference>
<dbReference type="InterPro" id="IPR023267">
    <property type="entry name" value="RCMT"/>
</dbReference>
<dbReference type="InterPro" id="IPR023545">
    <property type="entry name" value="rRNA_ssu_MeTfrase_F"/>
</dbReference>
<dbReference type="InterPro" id="IPR018314">
    <property type="entry name" value="RsmB/NOL1/NOP2-like_CS"/>
</dbReference>
<dbReference type="InterPro" id="IPR029063">
    <property type="entry name" value="SAM-dependent_MTases_sf"/>
</dbReference>
<dbReference type="InterPro" id="IPR048457">
    <property type="entry name" value="YebU_pre-PUA_dom"/>
</dbReference>
<dbReference type="NCBIfam" id="TIGR00446">
    <property type="entry name" value="nop2p"/>
    <property type="match status" value="1"/>
</dbReference>
<dbReference type="NCBIfam" id="NF008898">
    <property type="entry name" value="PRK11933.1"/>
    <property type="match status" value="1"/>
</dbReference>
<dbReference type="PANTHER" id="PTHR22807:SF30">
    <property type="entry name" value="28S RRNA (CYTOSINE(4447)-C(5))-METHYLTRANSFERASE-RELATED"/>
    <property type="match status" value="1"/>
</dbReference>
<dbReference type="PANTHER" id="PTHR22807">
    <property type="entry name" value="NOP2 YEAST -RELATED NOL1/NOP2/FMU SUN DOMAIN-CONTAINING"/>
    <property type="match status" value="1"/>
</dbReference>
<dbReference type="Pfam" id="PF01189">
    <property type="entry name" value="Methyltr_RsmB-F"/>
    <property type="match status" value="1"/>
</dbReference>
<dbReference type="Pfam" id="PF17125">
    <property type="entry name" value="Methyltr_RsmF_N"/>
    <property type="match status" value="1"/>
</dbReference>
<dbReference type="Pfam" id="PF13636">
    <property type="entry name" value="Methyltranf_PUA"/>
    <property type="match status" value="1"/>
</dbReference>
<dbReference type="Pfam" id="PF21150">
    <property type="entry name" value="YebU_pre-PUA_dom"/>
    <property type="match status" value="1"/>
</dbReference>
<dbReference type="PRINTS" id="PR02008">
    <property type="entry name" value="RCMTFAMILY"/>
</dbReference>
<dbReference type="SUPFAM" id="SSF53335">
    <property type="entry name" value="S-adenosyl-L-methionine-dependent methyltransferases"/>
    <property type="match status" value="1"/>
</dbReference>
<dbReference type="PROSITE" id="PS01153">
    <property type="entry name" value="NOL1_NOP2_SUN"/>
    <property type="match status" value="1"/>
</dbReference>
<dbReference type="PROSITE" id="PS51686">
    <property type="entry name" value="SAM_MT_RSMB_NOP"/>
    <property type="match status" value="1"/>
</dbReference>
<protein>
    <recommendedName>
        <fullName evidence="1">Ribosomal RNA small subunit methyltransferase F</fullName>
        <ecNumber evidence="1">2.1.1.178</ecNumber>
    </recommendedName>
    <alternativeName>
        <fullName evidence="1">16S rRNA m5C1407 methyltransferase</fullName>
    </alternativeName>
    <alternativeName>
        <fullName evidence="1">rRNA (cytosine-C(5)-)-methyltransferase RsmF</fullName>
    </alternativeName>
</protein>
<gene>
    <name evidence="1" type="primary">rsmF</name>
    <name type="ordered locus">EcolC_1797</name>
</gene>
<keyword id="KW-0963">Cytoplasm</keyword>
<keyword id="KW-0489">Methyltransferase</keyword>
<keyword id="KW-0694">RNA-binding</keyword>
<keyword id="KW-0698">rRNA processing</keyword>
<keyword id="KW-0949">S-adenosyl-L-methionine</keyword>
<keyword id="KW-0808">Transferase</keyword>
<comment type="function">
    <text evidence="1">Specifically methylates the cytosine at position 1407 (m5C1407) of 16S rRNA.</text>
</comment>
<comment type="catalytic activity">
    <reaction evidence="1">
        <text>cytidine(1407) in 16S rRNA + S-adenosyl-L-methionine = 5-methylcytidine(1407) in 16S rRNA + S-adenosyl-L-homocysteine + H(+)</text>
        <dbReference type="Rhea" id="RHEA:42756"/>
        <dbReference type="Rhea" id="RHEA-COMP:10223"/>
        <dbReference type="Rhea" id="RHEA-COMP:10224"/>
        <dbReference type="ChEBI" id="CHEBI:15378"/>
        <dbReference type="ChEBI" id="CHEBI:57856"/>
        <dbReference type="ChEBI" id="CHEBI:59789"/>
        <dbReference type="ChEBI" id="CHEBI:74483"/>
        <dbReference type="ChEBI" id="CHEBI:82748"/>
        <dbReference type="EC" id="2.1.1.178"/>
    </reaction>
</comment>
<comment type="subcellular location">
    <subcellularLocation>
        <location evidence="1">Cytoplasm</location>
    </subcellularLocation>
</comment>
<comment type="similarity">
    <text evidence="1">Belongs to the class I-like SAM-binding methyltransferase superfamily. RsmB/NOP family.</text>
</comment>
<comment type="sequence caution" evidence="2">
    <conflict type="erroneous initiation">
        <sequence resource="EMBL-CDS" id="ACA77447"/>
    </conflict>
</comment>
<accession>B1J0Q3</accession>
<feature type="chain" id="PRO_0000382572" description="Ribosomal RNA small subunit methyltransferase F">
    <location>
        <begin position="1"/>
        <end position="479"/>
    </location>
</feature>
<feature type="active site" description="Nucleophile" evidence="1">
    <location>
        <position position="247"/>
    </location>
</feature>
<feature type="binding site" evidence="1">
    <location>
        <begin position="125"/>
        <end position="131"/>
    </location>
    <ligand>
        <name>S-adenosyl-L-methionine</name>
        <dbReference type="ChEBI" id="CHEBI:59789"/>
    </ligand>
</feature>
<feature type="binding site" evidence="1">
    <location>
        <position position="149"/>
    </location>
    <ligand>
        <name>S-adenosyl-L-methionine</name>
        <dbReference type="ChEBI" id="CHEBI:59789"/>
    </ligand>
</feature>
<feature type="binding site" evidence="1">
    <location>
        <position position="176"/>
    </location>
    <ligand>
        <name>S-adenosyl-L-methionine</name>
        <dbReference type="ChEBI" id="CHEBI:59789"/>
    </ligand>
</feature>
<feature type="binding site" evidence="1">
    <location>
        <position position="194"/>
    </location>
    <ligand>
        <name>S-adenosyl-L-methionine</name>
        <dbReference type="ChEBI" id="CHEBI:59789"/>
    </ligand>
</feature>
<name>RSMF_ECOLC</name>
<organism>
    <name type="scientific">Escherichia coli (strain ATCC 8739 / DSM 1576 / NBRC 3972 / NCIMB 8545 / WDCM 00012 / Crooks)</name>
    <dbReference type="NCBI Taxonomy" id="481805"/>
    <lineage>
        <taxon>Bacteria</taxon>
        <taxon>Pseudomonadati</taxon>
        <taxon>Pseudomonadota</taxon>
        <taxon>Gammaproteobacteria</taxon>
        <taxon>Enterobacterales</taxon>
        <taxon>Enterobacteriaceae</taxon>
        <taxon>Escherichia</taxon>
    </lineage>
</organism>